<accession>Q5FM05</accession>
<dbReference type="EMBL" id="CP000033">
    <property type="protein sequence ID" value="AAV42269.1"/>
    <property type="molecule type" value="Genomic_DNA"/>
</dbReference>
<dbReference type="RefSeq" id="WP_003549112.1">
    <property type="nucleotide sequence ID" value="NC_006814.3"/>
</dbReference>
<dbReference type="RefSeq" id="YP_193300.1">
    <property type="nucleotide sequence ID" value="NC_006814.3"/>
</dbReference>
<dbReference type="SMR" id="Q5FM05"/>
<dbReference type="STRING" id="272621.LBA0378"/>
<dbReference type="KEGG" id="lac:LBA0378"/>
<dbReference type="PATRIC" id="fig|272621.13.peg.364"/>
<dbReference type="eggNOG" id="COG0718">
    <property type="taxonomic scope" value="Bacteria"/>
</dbReference>
<dbReference type="HOGENOM" id="CLU_140930_1_1_9"/>
<dbReference type="BioCyc" id="LACI272621:G1G49-372-MONOMER"/>
<dbReference type="Proteomes" id="UP000006381">
    <property type="component" value="Chromosome"/>
</dbReference>
<dbReference type="GO" id="GO:0043590">
    <property type="term" value="C:bacterial nucleoid"/>
    <property type="evidence" value="ECO:0007669"/>
    <property type="project" value="UniProtKB-UniRule"/>
</dbReference>
<dbReference type="GO" id="GO:0005829">
    <property type="term" value="C:cytosol"/>
    <property type="evidence" value="ECO:0007669"/>
    <property type="project" value="TreeGrafter"/>
</dbReference>
<dbReference type="GO" id="GO:0003677">
    <property type="term" value="F:DNA binding"/>
    <property type="evidence" value="ECO:0007669"/>
    <property type="project" value="UniProtKB-UniRule"/>
</dbReference>
<dbReference type="Gene3D" id="3.30.1310.10">
    <property type="entry name" value="Nucleoid-associated protein YbaB-like domain"/>
    <property type="match status" value="1"/>
</dbReference>
<dbReference type="HAMAP" id="MF_00274">
    <property type="entry name" value="DNA_YbaB_EbfC"/>
    <property type="match status" value="1"/>
</dbReference>
<dbReference type="InterPro" id="IPR036894">
    <property type="entry name" value="YbaB-like_sf"/>
</dbReference>
<dbReference type="InterPro" id="IPR004401">
    <property type="entry name" value="YbaB/EbfC"/>
</dbReference>
<dbReference type="NCBIfam" id="TIGR00103">
    <property type="entry name" value="DNA_YbaB_EbfC"/>
    <property type="match status" value="1"/>
</dbReference>
<dbReference type="PANTHER" id="PTHR33449">
    <property type="entry name" value="NUCLEOID-ASSOCIATED PROTEIN YBAB"/>
    <property type="match status" value="1"/>
</dbReference>
<dbReference type="PANTHER" id="PTHR33449:SF1">
    <property type="entry name" value="NUCLEOID-ASSOCIATED PROTEIN YBAB"/>
    <property type="match status" value="1"/>
</dbReference>
<dbReference type="Pfam" id="PF02575">
    <property type="entry name" value="YbaB_DNA_bd"/>
    <property type="match status" value="1"/>
</dbReference>
<dbReference type="PIRSF" id="PIRSF004555">
    <property type="entry name" value="UCP004555"/>
    <property type="match status" value="1"/>
</dbReference>
<dbReference type="SUPFAM" id="SSF82607">
    <property type="entry name" value="YbaB-like"/>
    <property type="match status" value="1"/>
</dbReference>
<sequence>MSRRPNFGGMGMGGMNMQQMMKQAKKLQAQMAEEQENITAQEFVGKSADDLVVATFSGDRKLKDIKIDKDTIDPDDPDMLQDLIIDAVNKGLSQIDEATQASLGKYTKGLM</sequence>
<proteinExistence type="inferred from homology"/>
<organism>
    <name type="scientific">Lactobacillus acidophilus (strain ATCC 700396 / NCK56 / N2 / NCFM)</name>
    <dbReference type="NCBI Taxonomy" id="272621"/>
    <lineage>
        <taxon>Bacteria</taxon>
        <taxon>Bacillati</taxon>
        <taxon>Bacillota</taxon>
        <taxon>Bacilli</taxon>
        <taxon>Lactobacillales</taxon>
        <taxon>Lactobacillaceae</taxon>
        <taxon>Lactobacillus</taxon>
    </lineage>
</organism>
<keyword id="KW-0963">Cytoplasm</keyword>
<keyword id="KW-0238">DNA-binding</keyword>
<keyword id="KW-1185">Reference proteome</keyword>
<evidence type="ECO:0000255" key="1">
    <source>
        <dbReference type="HAMAP-Rule" id="MF_00274"/>
    </source>
</evidence>
<protein>
    <recommendedName>
        <fullName evidence="1">Nucleoid-associated protein LBA0378</fullName>
    </recommendedName>
</protein>
<name>Y378_LACAC</name>
<comment type="function">
    <text evidence="1">Binds to DNA and alters its conformation. May be involved in regulation of gene expression, nucleoid organization and DNA protection.</text>
</comment>
<comment type="subunit">
    <text evidence="1">Homodimer.</text>
</comment>
<comment type="subcellular location">
    <subcellularLocation>
        <location evidence="1">Cytoplasm</location>
        <location evidence="1">Nucleoid</location>
    </subcellularLocation>
</comment>
<comment type="similarity">
    <text evidence="1">Belongs to the YbaB/EbfC family.</text>
</comment>
<gene>
    <name type="ordered locus">LBA0378</name>
</gene>
<reference key="1">
    <citation type="journal article" date="2005" name="Proc. Natl. Acad. Sci. U.S.A.">
        <title>Complete genome sequence of the probiotic lactic acid bacterium Lactobacillus acidophilus NCFM.</title>
        <authorList>
            <person name="Altermann E."/>
            <person name="Russell W.M."/>
            <person name="Azcarate-Peril M.A."/>
            <person name="Barrangou R."/>
            <person name="Buck B.L."/>
            <person name="McAuliffe O."/>
            <person name="Souther N."/>
            <person name="Dobson A."/>
            <person name="Duong T."/>
            <person name="Callanan M."/>
            <person name="Lick S."/>
            <person name="Hamrick A."/>
            <person name="Cano R."/>
            <person name="Klaenhammer T.R."/>
        </authorList>
    </citation>
    <scope>NUCLEOTIDE SEQUENCE [LARGE SCALE GENOMIC DNA]</scope>
    <source>
        <strain>ATCC 700396 / NCK56 / N2 / NCFM</strain>
    </source>
</reference>
<feature type="chain" id="PRO_1000197658" description="Nucleoid-associated protein LBA0378">
    <location>
        <begin position="1"/>
        <end position="111"/>
    </location>
</feature>